<proteinExistence type="evidence at protein level"/>
<sequence>MASITSRASARASCSQANTRAGRVALSGGALLRPARPARSFVPARKQQQGAVRRGGALSARASAVEDIRKVLSDSSSPVAGQKYDYILVGGGTAACVLANRLSADGSKRVLVLEAGPDNTSRDVKIPAAITRLFRSPLDWNLFSELQEQLAERQIYMARGRLLGGSSATNATLYHRGAAGDYDAWGVEGWSSEDVLSWFVQAETNADFGPGAYHGSGGPMRVENPRYTNKQLHTAFFKAAEEVGLTPNSDFNDWSHDHAGYGTFQVMQDKGTRADMYRQYLKPVLGRRNLQVLTGAAVTKVNIDQAAGKAQALGVEFSTDGPTGERLSAELAPGGEVIMCAGAVHTPFLLKHSGVGPSAELKEFGIPVVSNLAGVGQNLQDQPACLTAAPVKEKYDGIAISDHIYNEKGQIRKRAIASYLLGGRGGLTSTGCDRGAFVRTAGQALPDLQVRFVPGMALDPDGVSTYVRFAKFQSQGLKWPSGITMQLIACRPQSTGSVGLKSADPFAPPKLSPGYLTDKDGADLATLRKGIHWARDVARSSALSEYLDGELFPGSGVVSDDQIDEYIRRSIHSSNAITGTCKMGNAGDSSSVVDNQLRVHGVEGLRVVDASVVPKIPGGQTGAPVVMIAERAAALLTGKATIGASAAAPATVAA</sequence>
<accession>A0A248QE08</accession>
<accession>A0A2D0TC92</accession>
<accession>E1ZTE9</accession>
<feature type="transit peptide" description="Chloroplast" evidence="1">
    <location>
        <begin position="1"/>
        <end position="62"/>
    </location>
</feature>
<feature type="chain" id="PRO_0000450329" description="Fatty acid photodecarboxylase, chloroplastic" evidence="1">
    <location>
        <begin position="63"/>
        <end position="654"/>
    </location>
</feature>
<feature type="binding site" evidence="2 10">
    <location>
        <begin position="93"/>
        <end position="94"/>
    </location>
    <ligand>
        <name>FAD</name>
        <dbReference type="ChEBI" id="CHEBI:57692"/>
    </ligand>
</feature>
<feature type="binding site" evidence="2 10">
    <location>
        <position position="114"/>
    </location>
    <ligand>
        <name>FAD</name>
        <dbReference type="ChEBI" id="CHEBI:57692"/>
    </ligand>
</feature>
<feature type="binding site" evidence="2 10">
    <location>
        <position position="162"/>
    </location>
    <ligand>
        <name>FAD</name>
        <dbReference type="ChEBI" id="CHEBI:57692"/>
    </ligand>
</feature>
<feature type="binding site" evidence="2 10">
    <location>
        <position position="166"/>
    </location>
    <ligand>
        <name>FAD</name>
        <dbReference type="ChEBI" id="CHEBI:57692"/>
    </ligand>
</feature>
<feature type="binding site" evidence="2 10">
    <location>
        <begin position="170"/>
        <end position="173"/>
    </location>
    <ligand>
        <name>FAD</name>
        <dbReference type="ChEBI" id="CHEBI:57692"/>
    </ligand>
</feature>
<feature type="binding site" evidence="2 10">
    <location>
        <position position="298"/>
    </location>
    <ligand>
        <name>FAD</name>
        <dbReference type="ChEBI" id="CHEBI:57692"/>
    </ligand>
</feature>
<feature type="binding site" evidence="2 10">
    <location>
        <position position="432"/>
    </location>
    <ligand>
        <name>hexadecanoate</name>
        <dbReference type="ChEBI" id="CHEBI:7896"/>
    </ligand>
</feature>
<feature type="binding site" evidence="2 10">
    <location>
        <position position="451"/>
    </location>
    <ligand>
        <name>hexadecanoate</name>
        <dbReference type="ChEBI" id="CHEBI:7896"/>
    </ligand>
</feature>
<feature type="binding site" evidence="2 10">
    <location>
        <position position="466"/>
    </location>
    <ligand>
        <name>hexadecanoate</name>
        <dbReference type="ChEBI" id="CHEBI:7896"/>
    </ligand>
</feature>
<feature type="binding site" evidence="2 10">
    <location>
        <position position="486"/>
    </location>
    <ligand>
        <name>hexadecanoate</name>
        <dbReference type="ChEBI" id="CHEBI:7896"/>
    </ligand>
</feature>
<feature type="binding site" evidence="2 10">
    <location>
        <position position="622"/>
    </location>
    <ligand>
        <name>FAD</name>
        <dbReference type="ChEBI" id="CHEBI:57692"/>
    </ligand>
</feature>
<feature type="helix" evidence="11">
    <location>
        <begin position="66"/>
        <end position="70"/>
    </location>
</feature>
<feature type="helix" evidence="11">
    <location>
        <begin position="71"/>
        <end position="74"/>
    </location>
</feature>
<feature type="strand" evidence="13">
    <location>
        <begin position="78"/>
        <end position="80"/>
    </location>
</feature>
<feature type="strand" evidence="12">
    <location>
        <begin position="83"/>
        <end position="89"/>
    </location>
</feature>
<feature type="helix" evidence="12">
    <location>
        <begin position="93"/>
        <end position="102"/>
    </location>
</feature>
<feature type="strand" evidence="12">
    <location>
        <begin position="104"/>
        <end position="108"/>
    </location>
</feature>
<feature type="strand" evidence="12">
    <location>
        <begin position="110"/>
        <end position="113"/>
    </location>
</feature>
<feature type="helix" evidence="12">
    <location>
        <begin position="122"/>
        <end position="125"/>
    </location>
</feature>
<feature type="helix" evidence="12">
    <location>
        <begin position="127"/>
        <end position="129"/>
    </location>
</feature>
<feature type="helix" evidence="12">
    <location>
        <begin position="130"/>
        <end position="133"/>
    </location>
</feature>
<feature type="strand" evidence="13">
    <location>
        <begin position="142"/>
        <end position="147"/>
    </location>
</feature>
<feature type="helix" evidence="12">
    <location>
        <begin position="148"/>
        <end position="150"/>
    </location>
</feature>
<feature type="strand" evidence="13">
    <location>
        <begin position="151"/>
        <end position="157"/>
    </location>
</feature>
<feature type="helix" evidence="12">
    <location>
        <begin position="165"/>
        <end position="168"/>
    </location>
</feature>
<feature type="helix" evidence="12">
    <location>
        <begin position="179"/>
        <end position="183"/>
    </location>
</feature>
<feature type="helix" evidence="12">
    <location>
        <begin position="192"/>
        <end position="202"/>
    </location>
</feature>
<feature type="strand" evidence="12">
    <location>
        <begin position="203"/>
        <end position="208"/>
    </location>
</feature>
<feature type="strand" evidence="12">
    <location>
        <begin position="210"/>
        <end position="213"/>
    </location>
</feature>
<feature type="strand" evidence="12">
    <location>
        <begin position="216"/>
        <end position="223"/>
    </location>
</feature>
<feature type="helix" evidence="12">
    <location>
        <begin position="230"/>
        <end position="242"/>
    </location>
</feature>
<feature type="strand" evidence="12">
    <location>
        <begin position="260"/>
        <end position="263"/>
    </location>
</feature>
<feature type="strand" evidence="12">
    <location>
        <begin position="266"/>
        <end position="269"/>
    </location>
</feature>
<feature type="helix" evidence="12">
    <location>
        <begin position="276"/>
        <end position="280"/>
    </location>
</feature>
<feature type="helix" evidence="12">
    <location>
        <begin position="282"/>
        <end position="284"/>
    </location>
</feature>
<feature type="strand" evidence="12">
    <location>
        <begin position="290"/>
        <end position="295"/>
    </location>
</feature>
<feature type="strand" evidence="12">
    <location>
        <begin position="297"/>
        <end position="304"/>
    </location>
</feature>
<feature type="strand" evidence="12">
    <location>
        <begin position="311"/>
        <end position="321"/>
    </location>
</feature>
<feature type="strand" evidence="12">
    <location>
        <begin position="328"/>
        <end position="339"/>
    </location>
</feature>
<feature type="helix" evidence="12">
    <location>
        <begin position="342"/>
        <end position="352"/>
    </location>
</feature>
<feature type="helix" evidence="12">
    <location>
        <begin position="358"/>
        <end position="363"/>
    </location>
</feature>
<feature type="strand" evidence="15">
    <location>
        <begin position="369"/>
        <end position="371"/>
    </location>
</feature>
<feature type="turn" evidence="12">
    <location>
        <begin position="373"/>
        <end position="376"/>
    </location>
</feature>
<feature type="strand" evidence="12">
    <location>
        <begin position="378"/>
        <end position="380"/>
    </location>
</feature>
<feature type="strand" evidence="12">
    <location>
        <begin position="383"/>
        <end position="391"/>
    </location>
</feature>
<feature type="helix" evidence="12">
    <location>
        <begin position="393"/>
        <end position="395"/>
    </location>
</feature>
<feature type="strand" evidence="11">
    <location>
        <begin position="397"/>
        <end position="399"/>
    </location>
</feature>
<feature type="helix" evidence="12">
    <location>
        <begin position="400"/>
        <end position="404"/>
    </location>
</feature>
<feature type="helix" evidence="12">
    <location>
        <begin position="413"/>
        <end position="422"/>
    </location>
</feature>
<feature type="helix" evidence="12">
    <location>
        <begin position="426"/>
        <end position="428"/>
    </location>
</feature>
<feature type="strand" evidence="12">
    <location>
        <begin position="434"/>
        <end position="438"/>
    </location>
</feature>
<feature type="strand" evidence="14">
    <location>
        <begin position="440"/>
        <end position="442"/>
    </location>
</feature>
<feature type="strand" evidence="12">
    <location>
        <begin position="448"/>
        <end position="455"/>
    </location>
</feature>
<feature type="strand" evidence="12">
    <location>
        <begin position="458"/>
        <end position="461"/>
    </location>
</feature>
<feature type="helix" evidence="12">
    <location>
        <begin position="462"/>
        <end position="471"/>
    </location>
</feature>
<feature type="turn" evidence="12">
    <location>
        <begin position="472"/>
        <end position="474"/>
    </location>
</feature>
<feature type="strand" evidence="12">
    <location>
        <begin position="482"/>
        <end position="491"/>
    </location>
</feature>
<feature type="strand" evidence="12">
    <location>
        <begin position="496"/>
        <end position="499"/>
    </location>
</feature>
<feature type="strand" evidence="12">
    <location>
        <begin position="501"/>
        <end position="503"/>
    </location>
</feature>
<feature type="strand" evidence="12">
    <location>
        <begin position="510"/>
        <end position="512"/>
    </location>
</feature>
<feature type="helix" evidence="12">
    <location>
        <begin position="522"/>
        <end position="539"/>
    </location>
</feature>
<feature type="helix" evidence="12">
    <location>
        <begin position="541"/>
        <end position="544"/>
    </location>
</feature>
<feature type="turn" evidence="14">
    <location>
        <begin position="553"/>
        <end position="556"/>
    </location>
</feature>
<feature type="helix" evidence="12">
    <location>
        <begin position="560"/>
        <end position="570"/>
    </location>
</feature>
<feature type="strand" evidence="13">
    <location>
        <begin position="592"/>
        <end position="594"/>
    </location>
</feature>
<feature type="strand" evidence="13">
    <location>
        <begin position="597"/>
        <end position="599"/>
    </location>
</feature>
<feature type="strand" evidence="12">
    <location>
        <begin position="603"/>
        <end position="607"/>
    </location>
</feature>
<feature type="helix" evidence="12">
    <location>
        <begin position="610"/>
        <end position="612"/>
    </location>
</feature>
<feature type="helix" evidence="12">
    <location>
        <begin position="622"/>
        <end position="636"/>
    </location>
</feature>
<keyword id="KW-0002">3D-structure</keyword>
<keyword id="KW-0150">Chloroplast</keyword>
<keyword id="KW-0274">FAD</keyword>
<keyword id="KW-0285">Flavoprotein</keyword>
<keyword id="KW-0456">Lyase</keyword>
<keyword id="KW-0934">Plastid</keyword>
<keyword id="KW-1185">Reference proteome</keyword>
<keyword id="KW-0809">Transit peptide</keyword>
<reference key="1">
    <citation type="journal article" date="2017" name="Science">
        <title>An algal photoenzyme converts fatty acids to hydrocarbons.</title>
        <authorList>
            <person name="Sorigue D."/>
            <person name="Legeret B."/>
            <person name="Cuine S."/>
            <person name="Blangy S."/>
            <person name="Moulin S."/>
            <person name="Billon E."/>
            <person name="Richaud P."/>
            <person name="Brugiere S."/>
            <person name="Coute Y."/>
            <person name="Nurizzo D."/>
            <person name="Mueller P."/>
            <person name="Brettel K."/>
            <person name="Pignol D."/>
            <person name="Arnoux P."/>
            <person name="Li-Beisson Y."/>
            <person name="Peltier G."/>
            <person name="Beisson F."/>
        </authorList>
    </citation>
    <scope>NUCLEOTIDE SEQUENCE [MRNA]</scope>
    <scope>X-RAY CRYSTALLOGRAPHY (3.12 ANGSTROMS) OF 62-654 IN COMPLEX WITH FAD AND PALMITATE</scope>
    <scope>FUNCTION</scope>
    <scope>CATALYTIC ACTIVITY</scope>
    <scope>COFACTOR</scope>
    <scope>ACTIVITY REGULATION</scope>
    <scope>BIOPHYSICOCHEMICAL PROPERTIES</scope>
    <scope>BIOTECHNOLOGY</scope>
    <source>
        <strain>NC64A</strain>
    </source>
</reference>
<reference key="2">
    <citation type="journal article" date="2010" name="Plant Cell">
        <title>The Chlorella variabilis NC64A genome reveals adaptation to photosymbiosis, coevolution with viruses, and cryptic sex.</title>
        <authorList>
            <person name="Blanc G."/>
            <person name="Duncan G."/>
            <person name="Agarkova I."/>
            <person name="Borodovsky M."/>
            <person name="Gurnon J."/>
            <person name="Kuo A."/>
            <person name="Lindquist E."/>
            <person name="Lucas S."/>
            <person name="Pangilinan J."/>
            <person name="Polle J."/>
            <person name="Salamov A."/>
            <person name="Terry A."/>
            <person name="Yamada T."/>
            <person name="Dunigan D.D."/>
            <person name="Grigoriev I.V."/>
            <person name="Claverie J.M."/>
            <person name="Van Etten J.L."/>
        </authorList>
    </citation>
    <scope>NUCLEOTIDE SEQUENCE [LARGE SCALE GENOMIC DNA]</scope>
    <source>
        <strain>NC64A</strain>
    </source>
</reference>
<reference key="3">
    <citation type="journal article" date="2018" name="Angew. Chem. Int. Ed.">
        <title>Light-driven enzymatic decarboxylation of fatty acids.</title>
        <authorList>
            <person name="Huijbers M.M.E."/>
            <person name="Zhang W."/>
            <person name="Tonin F."/>
            <person name="Hollmann F."/>
        </authorList>
    </citation>
    <scope>FUNCTION</scope>
</reference>
<reference key="4">
    <citation type="journal article" date="2019" name="Biotechnol. Biofuels">
        <title>Drop-in biofuel production using fatty acid photodecarboxylase from Chlorella variabilis in the oleaginous yeast Yarrowia lipolytica.</title>
        <authorList>
            <person name="Bruder S."/>
            <person name="Moldenhauer E.J."/>
            <person name="Lemke R.D."/>
            <person name="Ledesma-Amaro R."/>
            <person name="Kabisch J."/>
        </authorList>
    </citation>
    <scope>BIOTECHNOLOGY</scope>
</reference>
<reference key="5">
    <citation type="journal article" date="2019" name="J. Am. Chem. Soc.">
        <title>Hydrocarbon synthesis via photoenzymatic decarboxylation of carboxylic acids.</title>
        <authorList>
            <person name="Zhang W."/>
            <person name="Ma M."/>
            <person name="Huijbers M.M.E."/>
            <person name="Filonenko G.A."/>
            <person name="Pidko E.A."/>
            <person name="van Schie M."/>
            <person name="de Boer S."/>
            <person name="Burek B.O."/>
            <person name="Bloh J.Z."/>
            <person name="van Berkel W.J.H."/>
            <person name="Smith W.A."/>
            <person name="Hollmann F."/>
        </authorList>
    </citation>
    <scope>FUNCTION</scope>
</reference>
<reference key="6">
    <citation type="journal article" date="2023" name="Sci. Adv.">
        <title>Autocatalytic effect boosts the production of medium-chain hydrocarbons by fatty acid photodecarboxylase.</title>
        <authorList>
            <person name="Samire P.P."/>
            <person name="Zhuang B."/>
            <person name="Legeret B."/>
            <person name="Baca-Porcel A."/>
            <person name="Peltier G."/>
            <person name="Sorigue D."/>
            <person name="Aleksandrov A."/>
            <person name="Beisson F."/>
            <person name="Mueller P."/>
        </authorList>
    </citation>
    <scope>FUNCTION</scope>
    <scope>BIOTECHNOLOGY</scope>
    <scope>CATALYTIC ACTIVITY</scope>
    <scope>BIOPHYSICOCHEMICAL PROPERTIES</scope>
    <source>
        <strain>NC64A</strain>
    </source>
</reference>
<protein>
    <recommendedName>
        <fullName evidence="7">Fatty acid photodecarboxylase, chloroplastic</fullName>
        <shortName evidence="7">CvFAP</shortName>
        <ecNumber evidence="2 6">4.1.1.106</ecNumber>
    </recommendedName>
</protein>
<dbReference type="EC" id="4.1.1.106" evidence="2 6"/>
<dbReference type="EMBL" id="KY511411">
    <property type="protein sequence ID" value="ASM79489.1"/>
    <property type="molecule type" value="mRNA"/>
</dbReference>
<dbReference type="EMBL" id="GL433871">
    <property type="protein sequence ID" value="EFN50890.1"/>
    <property type="status" value="ALT_SEQ"/>
    <property type="molecule type" value="Genomic_DNA"/>
</dbReference>
<dbReference type="RefSeq" id="XP_005842992.1">
    <property type="nucleotide sequence ID" value="XM_005842930.1"/>
</dbReference>
<dbReference type="PDB" id="5NCC">
    <property type="method" value="X-ray"/>
    <property type="resolution" value="3.12 A"/>
    <property type="chains" value="A/B/C/D/E/F=62-654"/>
</dbReference>
<dbReference type="PDB" id="6YRU">
    <property type="method" value="X-ray"/>
    <property type="resolution" value="1.78 A"/>
    <property type="chains" value="AAA=77-654"/>
</dbReference>
<dbReference type="PDB" id="6YRV">
    <property type="method" value="X-ray"/>
    <property type="resolution" value="1.94 A"/>
    <property type="chains" value="AAA=77-654"/>
</dbReference>
<dbReference type="PDB" id="6YRX">
    <property type="method" value="X-ray"/>
    <property type="resolution" value="1.87 A"/>
    <property type="chains" value="AAA=77-654"/>
</dbReference>
<dbReference type="PDB" id="6YRZ">
    <property type="method" value="X-ray"/>
    <property type="resolution" value="1.82 A"/>
    <property type="chains" value="AAA=77-654"/>
</dbReference>
<dbReference type="PDB" id="6YS1">
    <property type="method" value="X-ray"/>
    <property type="resolution" value="1.64 A"/>
    <property type="chains" value="AAA=77-654"/>
</dbReference>
<dbReference type="PDB" id="6YS2">
    <property type="method" value="X-ray"/>
    <property type="resolution" value="1.97 A"/>
    <property type="chains" value="AAA=77-654"/>
</dbReference>
<dbReference type="PDB" id="6ZH7">
    <property type="method" value="X-ray"/>
    <property type="resolution" value="2.00 A"/>
    <property type="chains" value="A/B=76-654"/>
</dbReference>
<dbReference type="PDB" id="7AV4">
    <property type="method" value="X-ray"/>
    <property type="resolution" value="1.94 A"/>
    <property type="chains" value="AAA=1-654"/>
</dbReference>
<dbReference type="PDB" id="7R33">
    <property type="method" value="X-ray"/>
    <property type="resolution" value="2.00 A"/>
    <property type="chains" value="A/B=76-654"/>
</dbReference>
<dbReference type="PDB" id="7R34">
    <property type="method" value="X-ray"/>
    <property type="resolution" value="2.00 A"/>
    <property type="chains" value="A/B=76-654"/>
</dbReference>
<dbReference type="PDB" id="7R35">
    <property type="method" value="X-ray"/>
    <property type="resolution" value="2.00 A"/>
    <property type="chains" value="A/B=76-654"/>
</dbReference>
<dbReference type="PDB" id="7R36">
    <property type="method" value="X-ray"/>
    <property type="resolution" value="2.20 A"/>
    <property type="chains" value="A/B=76-654"/>
</dbReference>
<dbReference type="PDBsum" id="5NCC"/>
<dbReference type="PDBsum" id="6YRU"/>
<dbReference type="PDBsum" id="6YRV"/>
<dbReference type="PDBsum" id="6YRX"/>
<dbReference type="PDBsum" id="6YRZ"/>
<dbReference type="PDBsum" id="6YS1"/>
<dbReference type="PDBsum" id="6YS2"/>
<dbReference type="PDBsum" id="6ZH7"/>
<dbReference type="PDBsum" id="7AV4"/>
<dbReference type="PDBsum" id="7R33"/>
<dbReference type="PDBsum" id="7R34"/>
<dbReference type="PDBsum" id="7R35"/>
<dbReference type="PDBsum" id="7R36"/>
<dbReference type="SMR" id="A0A248QE08"/>
<dbReference type="FunCoup" id="A0A248QE08">
    <property type="interactions" value="403"/>
</dbReference>
<dbReference type="STRING" id="554065.E1ZTE9"/>
<dbReference type="GeneID" id="17350319"/>
<dbReference type="KEGG" id="cvr:CHLNCDRAFT_28598"/>
<dbReference type="eggNOG" id="KOG1238">
    <property type="taxonomic scope" value="Eukaryota"/>
</dbReference>
<dbReference type="InParanoid" id="A0A248QE08"/>
<dbReference type="OrthoDB" id="269227at2759"/>
<dbReference type="Proteomes" id="UP000008141">
    <property type="component" value="Unassembled WGS sequence"/>
</dbReference>
<dbReference type="GO" id="GO:0009507">
    <property type="term" value="C:chloroplast"/>
    <property type="evidence" value="ECO:0007669"/>
    <property type="project" value="UniProtKB-SubCell"/>
</dbReference>
<dbReference type="GO" id="GO:0016020">
    <property type="term" value="C:membrane"/>
    <property type="evidence" value="ECO:0007669"/>
    <property type="project" value="TreeGrafter"/>
</dbReference>
<dbReference type="GO" id="GO:0008812">
    <property type="term" value="F:choline dehydrogenase activity"/>
    <property type="evidence" value="ECO:0007669"/>
    <property type="project" value="TreeGrafter"/>
</dbReference>
<dbReference type="GO" id="GO:0050660">
    <property type="term" value="F:flavin adenine dinucleotide binding"/>
    <property type="evidence" value="ECO:0007669"/>
    <property type="project" value="InterPro"/>
</dbReference>
<dbReference type="GO" id="GO:0016829">
    <property type="term" value="F:lyase activity"/>
    <property type="evidence" value="ECO:0007669"/>
    <property type="project" value="UniProtKB-KW"/>
</dbReference>
<dbReference type="GO" id="GO:0019285">
    <property type="term" value="P:glycine betaine biosynthetic process from choline"/>
    <property type="evidence" value="ECO:0007669"/>
    <property type="project" value="TreeGrafter"/>
</dbReference>
<dbReference type="Gene3D" id="3.50.50.60">
    <property type="entry name" value="FAD/NAD(P)-binding domain"/>
    <property type="match status" value="1"/>
</dbReference>
<dbReference type="Gene3D" id="3.30.560.10">
    <property type="entry name" value="Glucose Oxidase, domain 3"/>
    <property type="match status" value="1"/>
</dbReference>
<dbReference type="InterPro" id="IPR036188">
    <property type="entry name" value="FAD/NAD-bd_sf"/>
</dbReference>
<dbReference type="InterPro" id="IPR012132">
    <property type="entry name" value="GMC_OxRdtase"/>
</dbReference>
<dbReference type="InterPro" id="IPR000172">
    <property type="entry name" value="GMC_OxRdtase_N"/>
</dbReference>
<dbReference type="InterPro" id="IPR007867">
    <property type="entry name" value="GMC_OxRtase_C"/>
</dbReference>
<dbReference type="PANTHER" id="PTHR11552:SF147">
    <property type="entry name" value="CHOLINE DEHYDROGENASE, MITOCHONDRIAL"/>
    <property type="match status" value="1"/>
</dbReference>
<dbReference type="PANTHER" id="PTHR11552">
    <property type="entry name" value="GLUCOSE-METHANOL-CHOLINE GMC OXIDOREDUCTASE"/>
    <property type="match status" value="1"/>
</dbReference>
<dbReference type="Pfam" id="PF05199">
    <property type="entry name" value="GMC_oxred_C"/>
    <property type="match status" value="1"/>
</dbReference>
<dbReference type="Pfam" id="PF00732">
    <property type="entry name" value="GMC_oxred_N"/>
    <property type="match status" value="1"/>
</dbReference>
<dbReference type="PIRSF" id="PIRSF000137">
    <property type="entry name" value="Alcohol_oxidase"/>
    <property type="match status" value="1"/>
</dbReference>
<dbReference type="SUPFAM" id="SSF54373">
    <property type="entry name" value="FAD-linked reductases, C-terminal domain"/>
    <property type="match status" value="1"/>
</dbReference>
<dbReference type="SUPFAM" id="SSF51905">
    <property type="entry name" value="FAD/NAD(P)-binding domain"/>
    <property type="match status" value="1"/>
</dbReference>
<dbReference type="PROSITE" id="PS00624">
    <property type="entry name" value="GMC_OXRED_2"/>
    <property type="match status" value="1"/>
</dbReference>
<comment type="function">
    <text evidence="2 3 4 6">Catalyzes the decarboxylation of free fatty acids to n-alkanes or n-alkenes in response to blue light (PubMed:28860382, PubMed:30106504, PubMed:30673222). Substrate preference is toward fatty acids with C16 or C17 chains (PubMed:28860382, PubMed:30106504, PubMed:30673222). Converts n-octanoic acid (C8 chain) more efficiently than palmitate (n-hexadecanoic acid, C16 chain) into n-heptane (C7 chain) and n-pentadecane (C15 chain), respectively, partly due to an autocatalytic effect of its n-heptane product (PubMed:37000872). Saturated fatty acids are converted to alkanes, not alkenes (PubMed:28860382). The decarboxylation is initiated through electron abstraction from the fatty acid by the photo-excited FAD (PubMed:28860382).</text>
</comment>
<comment type="catalytic activity">
    <reaction evidence="2">
        <text>a long-chain fatty acid + hnu + H(+) = a long-chain alkane + CO2</text>
        <dbReference type="Rhea" id="RHEA:18969"/>
        <dbReference type="ChEBI" id="CHEBI:15378"/>
        <dbReference type="ChEBI" id="CHEBI:16526"/>
        <dbReference type="ChEBI" id="CHEBI:30212"/>
        <dbReference type="ChEBI" id="CHEBI:57560"/>
        <dbReference type="ChEBI" id="CHEBI:83563"/>
        <dbReference type="EC" id="4.1.1.106"/>
    </reaction>
    <physiologicalReaction direction="left-to-right" evidence="2">
        <dbReference type="Rhea" id="RHEA:18970"/>
    </physiologicalReaction>
</comment>
<comment type="catalytic activity">
    <reaction evidence="2 6">
        <text>hnu + hexadecanoate + H(+) = pentadecane + CO2</text>
        <dbReference type="Rhea" id="RHEA:56060"/>
        <dbReference type="ChEBI" id="CHEBI:7896"/>
        <dbReference type="ChEBI" id="CHEBI:15378"/>
        <dbReference type="ChEBI" id="CHEBI:16526"/>
        <dbReference type="ChEBI" id="CHEBI:28897"/>
        <dbReference type="ChEBI" id="CHEBI:30212"/>
        <dbReference type="EC" id="4.1.1.106"/>
    </reaction>
    <physiologicalReaction direction="left-to-right" evidence="2 6">
        <dbReference type="Rhea" id="RHEA:56061"/>
    </physiologicalReaction>
</comment>
<comment type="catalytic activity">
    <reaction evidence="2 6">
        <text>hnu + octadecanoate + H(+) = heptadecane + CO2</text>
        <dbReference type="Rhea" id="RHEA:77243"/>
        <dbReference type="ChEBI" id="CHEBI:15378"/>
        <dbReference type="ChEBI" id="CHEBI:16148"/>
        <dbReference type="ChEBI" id="CHEBI:16526"/>
        <dbReference type="ChEBI" id="CHEBI:25629"/>
        <dbReference type="ChEBI" id="CHEBI:30212"/>
    </reaction>
    <physiologicalReaction direction="left-to-right" evidence="2 6">
        <dbReference type="Rhea" id="RHEA:77244"/>
    </physiologicalReaction>
</comment>
<comment type="catalytic activity">
    <reaction evidence="2">
        <text>heptadecanoate + hnu + H(+) = hexadecane + CO2</text>
        <dbReference type="Rhea" id="RHEA:77375"/>
        <dbReference type="ChEBI" id="CHEBI:15378"/>
        <dbReference type="ChEBI" id="CHEBI:16526"/>
        <dbReference type="ChEBI" id="CHEBI:30212"/>
        <dbReference type="ChEBI" id="CHEBI:32366"/>
        <dbReference type="ChEBI" id="CHEBI:45296"/>
    </reaction>
    <physiologicalReaction direction="left-to-right" evidence="2">
        <dbReference type="Rhea" id="RHEA:77376"/>
    </physiologicalReaction>
</comment>
<comment type="catalytic activity">
    <reaction evidence="2 6">
        <text>hnu + tetradecanoate + H(+) = tridecane + CO2</text>
        <dbReference type="Rhea" id="RHEA:77379"/>
        <dbReference type="ChEBI" id="CHEBI:15378"/>
        <dbReference type="ChEBI" id="CHEBI:16526"/>
        <dbReference type="ChEBI" id="CHEBI:30212"/>
        <dbReference type="ChEBI" id="CHEBI:30807"/>
        <dbReference type="ChEBI" id="CHEBI:35998"/>
    </reaction>
    <physiologicalReaction direction="left-to-right" evidence="2 6">
        <dbReference type="Rhea" id="RHEA:77380"/>
    </physiologicalReaction>
</comment>
<comment type="catalytic activity">
    <reaction evidence="6">
        <text>octanoate + hnu + H(+) = heptane + CO2</text>
        <dbReference type="Rhea" id="RHEA:77383"/>
        <dbReference type="ChEBI" id="CHEBI:15378"/>
        <dbReference type="ChEBI" id="CHEBI:16526"/>
        <dbReference type="ChEBI" id="CHEBI:25646"/>
        <dbReference type="ChEBI" id="CHEBI:30212"/>
        <dbReference type="ChEBI" id="CHEBI:43098"/>
    </reaction>
    <physiologicalReaction direction="left-to-right" evidence="6">
        <dbReference type="Rhea" id="RHEA:77384"/>
    </physiologicalReaction>
</comment>
<comment type="cofactor">
    <cofactor evidence="2">
        <name>FAD</name>
        <dbReference type="ChEBI" id="CHEBI:57692"/>
    </cofactor>
    <text evidence="2">Binds 1 FAD per subunit.</text>
</comment>
<comment type="activity regulation">
    <text evidence="2">Activated by blue light and repressed by red light.</text>
</comment>
<comment type="biophysicochemical properties">
    <phDependence>
        <text evidence="2 6">Optimum pH is 8.5 (with palmitate as substrate) (PubMed:28860382, PubMed:37000872). Optimum pH is 6.0 (with octanoate as substrate) (PubMed:37000872).</text>
    </phDependence>
</comment>
<comment type="subcellular location">
    <subcellularLocation>
        <location evidence="1">Plastid</location>
        <location evidence="1">Chloroplast</location>
    </subcellularLocation>
</comment>
<comment type="biotechnology">
    <text evidence="2 5 6">May be used in light-driven, bio-based production of hydrocarbons (PubMed:28860382). The oleaginous yeast Yarrowia lipolytica expressing FAP from Chlorella variabilis under blue light conditions produces odd-numbered alkanes and alkenes, which could be used as drop-in biofuel (PubMed:31462926).</text>
</comment>
<comment type="similarity">
    <text evidence="8">Belongs to the GMC oxidoreductase family.</text>
</comment>
<comment type="sequence caution" evidence="8">
    <conflict type="erroneous gene model prediction">
        <sequence resource="EMBL-CDS" id="EFN50890"/>
    </conflict>
</comment>
<gene>
    <name evidence="7" type="primary">FAP</name>
    <name evidence="9" type="ORF">CHLNCDRAFT_28598</name>
</gene>
<organism>
    <name type="scientific">Chlorella variabilis</name>
    <name type="common">Green alga</name>
    <dbReference type="NCBI Taxonomy" id="554065"/>
    <lineage>
        <taxon>Eukaryota</taxon>
        <taxon>Viridiplantae</taxon>
        <taxon>Chlorophyta</taxon>
        <taxon>core chlorophytes</taxon>
        <taxon>Trebouxiophyceae</taxon>
        <taxon>Chlorellales</taxon>
        <taxon>Chlorellaceae</taxon>
        <taxon>Chlorella clade</taxon>
        <taxon>Chlorella</taxon>
    </lineage>
</organism>
<name>FAP_CHLVA</name>
<evidence type="ECO:0000255" key="1"/>
<evidence type="ECO:0000269" key="2">
    <source>
    </source>
</evidence>
<evidence type="ECO:0000269" key="3">
    <source>
    </source>
</evidence>
<evidence type="ECO:0000269" key="4">
    <source>
    </source>
</evidence>
<evidence type="ECO:0000269" key="5">
    <source>
    </source>
</evidence>
<evidence type="ECO:0000269" key="6">
    <source>
    </source>
</evidence>
<evidence type="ECO:0000303" key="7">
    <source>
    </source>
</evidence>
<evidence type="ECO:0000305" key="8"/>
<evidence type="ECO:0000312" key="9">
    <source>
        <dbReference type="EMBL" id="EFN50890.1"/>
    </source>
</evidence>
<evidence type="ECO:0007744" key="10">
    <source>
        <dbReference type="PDB" id="5NCC"/>
    </source>
</evidence>
<evidence type="ECO:0007829" key="11">
    <source>
        <dbReference type="PDB" id="5NCC"/>
    </source>
</evidence>
<evidence type="ECO:0007829" key="12">
    <source>
        <dbReference type="PDB" id="6ZH7"/>
    </source>
</evidence>
<evidence type="ECO:0007829" key="13">
    <source>
        <dbReference type="PDB" id="7R33"/>
    </source>
</evidence>
<evidence type="ECO:0007829" key="14">
    <source>
        <dbReference type="PDB" id="7R35"/>
    </source>
</evidence>
<evidence type="ECO:0007829" key="15">
    <source>
        <dbReference type="PDB" id="7R36"/>
    </source>
</evidence>